<organism>
    <name type="scientific">Prochlorococcus marinus (strain MIT 9211)</name>
    <dbReference type="NCBI Taxonomy" id="93059"/>
    <lineage>
        <taxon>Bacteria</taxon>
        <taxon>Bacillati</taxon>
        <taxon>Cyanobacteriota</taxon>
        <taxon>Cyanophyceae</taxon>
        <taxon>Synechococcales</taxon>
        <taxon>Prochlorococcaceae</taxon>
        <taxon>Prochlorococcus</taxon>
    </lineage>
</organism>
<feature type="chain" id="PRO_1000098218" description="6,7-dimethyl-8-ribityllumazine synthase">
    <location>
        <begin position="1"/>
        <end position="158"/>
    </location>
</feature>
<feature type="active site" description="Proton donor" evidence="1">
    <location>
        <position position="93"/>
    </location>
</feature>
<feature type="binding site" evidence="1">
    <location>
        <position position="23"/>
    </location>
    <ligand>
        <name>5-amino-6-(D-ribitylamino)uracil</name>
        <dbReference type="ChEBI" id="CHEBI:15934"/>
    </ligand>
</feature>
<feature type="binding site" evidence="1">
    <location>
        <begin position="61"/>
        <end position="63"/>
    </location>
    <ligand>
        <name>5-amino-6-(D-ribitylamino)uracil</name>
        <dbReference type="ChEBI" id="CHEBI:15934"/>
    </ligand>
</feature>
<feature type="binding site" evidence="1">
    <location>
        <begin position="85"/>
        <end position="87"/>
    </location>
    <ligand>
        <name>5-amino-6-(D-ribitylamino)uracil</name>
        <dbReference type="ChEBI" id="CHEBI:15934"/>
    </ligand>
</feature>
<feature type="binding site" evidence="1">
    <location>
        <begin position="90"/>
        <end position="91"/>
    </location>
    <ligand>
        <name>(2S)-2-hydroxy-3-oxobutyl phosphate</name>
        <dbReference type="ChEBI" id="CHEBI:58830"/>
    </ligand>
</feature>
<feature type="binding site" evidence="1">
    <location>
        <position position="118"/>
    </location>
    <ligand>
        <name>5-amino-6-(D-ribitylamino)uracil</name>
        <dbReference type="ChEBI" id="CHEBI:15934"/>
    </ligand>
</feature>
<feature type="binding site" evidence="1">
    <location>
        <position position="132"/>
    </location>
    <ligand>
        <name>(2S)-2-hydroxy-3-oxobutyl phosphate</name>
        <dbReference type="ChEBI" id="CHEBI:58830"/>
    </ligand>
</feature>
<protein>
    <recommendedName>
        <fullName evidence="1">6,7-dimethyl-8-ribityllumazine synthase</fullName>
        <shortName evidence="1">DMRL synthase</shortName>
        <shortName evidence="1">LS</shortName>
        <shortName evidence="1">Lumazine synthase</shortName>
        <ecNumber evidence="1">2.5.1.78</ecNumber>
    </recommendedName>
</protein>
<reference key="1">
    <citation type="journal article" date="2007" name="PLoS Genet.">
        <title>Patterns and implications of gene gain and loss in the evolution of Prochlorococcus.</title>
        <authorList>
            <person name="Kettler G.C."/>
            <person name="Martiny A.C."/>
            <person name="Huang K."/>
            <person name="Zucker J."/>
            <person name="Coleman M.L."/>
            <person name="Rodrigue S."/>
            <person name="Chen F."/>
            <person name="Lapidus A."/>
            <person name="Ferriera S."/>
            <person name="Johnson J."/>
            <person name="Steglich C."/>
            <person name="Church G.M."/>
            <person name="Richardson P."/>
            <person name="Chisholm S.W."/>
        </authorList>
    </citation>
    <scope>NUCLEOTIDE SEQUENCE [LARGE SCALE GENOMIC DNA]</scope>
    <source>
        <strain>MIT 9211</strain>
    </source>
</reference>
<sequence>MVSIEGRFNDASNFRIAIVVARFNDLITNKLLSGCIDCLQRHGVDTSESSPQLDIIWVPGSMELPLICQSLASKGKYQVLITLGAVIRGDTPHFEVVINESSKGIASVARENGIPIIYGVLTTDTMQQALERAGIKSNLGWNYALQALEMASLMKALR</sequence>
<name>RISB_PROM4</name>
<accession>A9BD87</accession>
<evidence type="ECO:0000255" key="1">
    <source>
        <dbReference type="HAMAP-Rule" id="MF_00178"/>
    </source>
</evidence>
<dbReference type="EC" id="2.5.1.78" evidence="1"/>
<dbReference type="EMBL" id="CP000878">
    <property type="protein sequence ID" value="ABX09700.1"/>
    <property type="molecule type" value="Genomic_DNA"/>
</dbReference>
<dbReference type="RefSeq" id="WP_012196320.1">
    <property type="nucleotide sequence ID" value="NC_009976.1"/>
</dbReference>
<dbReference type="SMR" id="A9BD87"/>
<dbReference type="STRING" id="93059.P9211_17691"/>
<dbReference type="KEGG" id="pmj:P9211_17691"/>
<dbReference type="eggNOG" id="COG0054">
    <property type="taxonomic scope" value="Bacteria"/>
</dbReference>
<dbReference type="HOGENOM" id="CLU_089358_1_0_3"/>
<dbReference type="OrthoDB" id="9809709at2"/>
<dbReference type="UniPathway" id="UPA00275">
    <property type="reaction ID" value="UER00404"/>
</dbReference>
<dbReference type="Proteomes" id="UP000000788">
    <property type="component" value="Chromosome"/>
</dbReference>
<dbReference type="GO" id="GO:0005829">
    <property type="term" value="C:cytosol"/>
    <property type="evidence" value="ECO:0007669"/>
    <property type="project" value="TreeGrafter"/>
</dbReference>
<dbReference type="GO" id="GO:0009349">
    <property type="term" value="C:riboflavin synthase complex"/>
    <property type="evidence" value="ECO:0007669"/>
    <property type="project" value="InterPro"/>
</dbReference>
<dbReference type="GO" id="GO:0000906">
    <property type="term" value="F:6,7-dimethyl-8-ribityllumazine synthase activity"/>
    <property type="evidence" value="ECO:0007669"/>
    <property type="project" value="UniProtKB-UniRule"/>
</dbReference>
<dbReference type="GO" id="GO:0009231">
    <property type="term" value="P:riboflavin biosynthetic process"/>
    <property type="evidence" value="ECO:0007669"/>
    <property type="project" value="UniProtKB-UniRule"/>
</dbReference>
<dbReference type="CDD" id="cd09209">
    <property type="entry name" value="Lumazine_synthase-I"/>
    <property type="match status" value="1"/>
</dbReference>
<dbReference type="Gene3D" id="3.40.50.960">
    <property type="entry name" value="Lumazine/riboflavin synthase"/>
    <property type="match status" value="1"/>
</dbReference>
<dbReference type="HAMAP" id="MF_00178">
    <property type="entry name" value="Lumazine_synth"/>
    <property type="match status" value="1"/>
</dbReference>
<dbReference type="InterPro" id="IPR034964">
    <property type="entry name" value="LS"/>
</dbReference>
<dbReference type="InterPro" id="IPR002180">
    <property type="entry name" value="LS/RS"/>
</dbReference>
<dbReference type="InterPro" id="IPR036467">
    <property type="entry name" value="LS/RS_sf"/>
</dbReference>
<dbReference type="NCBIfam" id="TIGR00114">
    <property type="entry name" value="lumazine-synth"/>
    <property type="match status" value="1"/>
</dbReference>
<dbReference type="PANTHER" id="PTHR21058:SF0">
    <property type="entry name" value="6,7-DIMETHYL-8-RIBITYLLUMAZINE SYNTHASE"/>
    <property type="match status" value="1"/>
</dbReference>
<dbReference type="PANTHER" id="PTHR21058">
    <property type="entry name" value="6,7-DIMETHYL-8-RIBITYLLUMAZINE SYNTHASE DMRL SYNTHASE LUMAZINE SYNTHASE"/>
    <property type="match status" value="1"/>
</dbReference>
<dbReference type="Pfam" id="PF00885">
    <property type="entry name" value="DMRL_synthase"/>
    <property type="match status" value="1"/>
</dbReference>
<dbReference type="SUPFAM" id="SSF52121">
    <property type="entry name" value="Lumazine synthase"/>
    <property type="match status" value="1"/>
</dbReference>
<gene>
    <name evidence="1" type="primary">ribH</name>
    <name type="ordered locus">P9211_17691</name>
</gene>
<keyword id="KW-1185">Reference proteome</keyword>
<keyword id="KW-0686">Riboflavin biosynthesis</keyword>
<keyword id="KW-0808">Transferase</keyword>
<proteinExistence type="inferred from homology"/>
<comment type="function">
    <text evidence="1">Catalyzes the formation of 6,7-dimethyl-8-ribityllumazine by condensation of 5-amino-6-(D-ribitylamino)uracil with 3,4-dihydroxy-2-butanone 4-phosphate. This is the penultimate step in the biosynthesis of riboflavin.</text>
</comment>
<comment type="catalytic activity">
    <reaction evidence="1">
        <text>(2S)-2-hydroxy-3-oxobutyl phosphate + 5-amino-6-(D-ribitylamino)uracil = 6,7-dimethyl-8-(1-D-ribityl)lumazine + phosphate + 2 H2O + H(+)</text>
        <dbReference type="Rhea" id="RHEA:26152"/>
        <dbReference type="ChEBI" id="CHEBI:15377"/>
        <dbReference type="ChEBI" id="CHEBI:15378"/>
        <dbReference type="ChEBI" id="CHEBI:15934"/>
        <dbReference type="ChEBI" id="CHEBI:43474"/>
        <dbReference type="ChEBI" id="CHEBI:58201"/>
        <dbReference type="ChEBI" id="CHEBI:58830"/>
        <dbReference type="EC" id="2.5.1.78"/>
    </reaction>
</comment>
<comment type="pathway">
    <text evidence="1">Cofactor biosynthesis; riboflavin biosynthesis; riboflavin from 2-hydroxy-3-oxobutyl phosphate and 5-amino-6-(D-ribitylamino)uracil: step 1/2.</text>
</comment>
<comment type="similarity">
    <text evidence="1">Belongs to the DMRL synthase family.</text>
</comment>